<sequence>MAKEFGRPQRVAQEMQKEIALILQREIKDPRVGMMTTVSGVEMSRDLAYAKVFVTFLNDQDEAAVKNGIKALQEASGFIRSLLGKAMRLRIVPELTFFYDNSLVEGMRMSNLVTNVVKHDEERRVNPDDSKED</sequence>
<protein>
    <recommendedName>
        <fullName evidence="1">Ribosome-binding factor A</fullName>
    </recommendedName>
</protein>
<organism>
    <name type="scientific">Salmonella choleraesuis (strain SC-B67)</name>
    <dbReference type="NCBI Taxonomy" id="321314"/>
    <lineage>
        <taxon>Bacteria</taxon>
        <taxon>Pseudomonadati</taxon>
        <taxon>Pseudomonadota</taxon>
        <taxon>Gammaproteobacteria</taxon>
        <taxon>Enterobacterales</taxon>
        <taxon>Enterobacteriaceae</taxon>
        <taxon>Salmonella</taxon>
    </lineage>
</organism>
<evidence type="ECO:0000255" key="1">
    <source>
        <dbReference type="HAMAP-Rule" id="MF_00003"/>
    </source>
</evidence>
<reference key="1">
    <citation type="journal article" date="2005" name="Nucleic Acids Res.">
        <title>The genome sequence of Salmonella enterica serovar Choleraesuis, a highly invasive and resistant zoonotic pathogen.</title>
        <authorList>
            <person name="Chiu C.-H."/>
            <person name="Tang P."/>
            <person name="Chu C."/>
            <person name="Hu S."/>
            <person name="Bao Q."/>
            <person name="Yu J."/>
            <person name="Chou Y.-Y."/>
            <person name="Wang H.-S."/>
            <person name="Lee Y.-S."/>
        </authorList>
    </citation>
    <scope>NUCLEOTIDE SEQUENCE [LARGE SCALE GENOMIC DNA]</scope>
    <source>
        <strain>SC-B67</strain>
    </source>
</reference>
<accession>Q57JI0</accession>
<proteinExistence type="inferred from homology"/>
<gene>
    <name evidence="1" type="primary">rbfA</name>
    <name type="ordered locus">SCH_3226</name>
</gene>
<feature type="chain" id="PRO_1000000198" description="Ribosome-binding factor A">
    <location>
        <begin position="1"/>
        <end position="133"/>
    </location>
</feature>
<comment type="function">
    <text evidence="1">One of several proteins that assist in the late maturation steps of the functional core of the 30S ribosomal subunit. Associates with free 30S ribosomal subunits (but not with 30S subunits that are part of 70S ribosomes or polysomes). Required for efficient processing of 16S rRNA. May interact with the 5'-terminal helix region of 16S rRNA.</text>
</comment>
<comment type="subunit">
    <text evidence="1">Monomer. Binds 30S ribosomal subunits, but not 50S ribosomal subunits or 70S ribosomes.</text>
</comment>
<comment type="subcellular location">
    <subcellularLocation>
        <location evidence="1">Cytoplasm</location>
    </subcellularLocation>
</comment>
<comment type="similarity">
    <text evidence="1">Belongs to the RbfA family.</text>
</comment>
<name>RBFA_SALCH</name>
<dbReference type="EMBL" id="AE017220">
    <property type="protein sequence ID" value="AAX67132.1"/>
    <property type="molecule type" value="Genomic_DNA"/>
</dbReference>
<dbReference type="RefSeq" id="WP_001040208.1">
    <property type="nucleotide sequence ID" value="NC_006905.1"/>
</dbReference>
<dbReference type="SMR" id="Q57JI0"/>
<dbReference type="KEGG" id="sec:SCH_3226"/>
<dbReference type="HOGENOM" id="CLU_089475_5_0_6"/>
<dbReference type="Proteomes" id="UP000000538">
    <property type="component" value="Chromosome"/>
</dbReference>
<dbReference type="GO" id="GO:0005829">
    <property type="term" value="C:cytosol"/>
    <property type="evidence" value="ECO:0007669"/>
    <property type="project" value="TreeGrafter"/>
</dbReference>
<dbReference type="GO" id="GO:0043024">
    <property type="term" value="F:ribosomal small subunit binding"/>
    <property type="evidence" value="ECO:0007669"/>
    <property type="project" value="TreeGrafter"/>
</dbReference>
<dbReference type="GO" id="GO:0030490">
    <property type="term" value="P:maturation of SSU-rRNA"/>
    <property type="evidence" value="ECO:0007669"/>
    <property type="project" value="UniProtKB-UniRule"/>
</dbReference>
<dbReference type="FunFam" id="3.30.300.20:FF:000007">
    <property type="entry name" value="Ribosome-binding factor A"/>
    <property type="match status" value="1"/>
</dbReference>
<dbReference type="Gene3D" id="3.30.300.20">
    <property type="match status" value="1"/>
</dbReference>
<dbReference type="HAMAP" id="MF_00003">
    <property type="entry name" value="RbfA"/>
    <property type="match status" value="1"/>
</dbReference>
<dbReference type="InterPro" id="IPR015946">
    <property type="entry name" value="KH_dom-like_a/b"/>
</dbReference>
<dbReference type="InterPro" id="IPR000238">
    <property type="entry name" value="RbfA"/>
</dbReference>
<dbReference type="InterPro" id="IPR023799">
    <property type="entry name" value="RbfA_dom_sf"/>
</dbReference>
<dbReference type="InterPro" id="IPR020053">
    <property type="entry name" value="Ribosome-bd_factorA_CS"/>
</dbReference>
<dbReference type="NCBIfam" id="TIGR00082">
    <property type="entry name" value="rbfA"/>
    <property type="match status" value="1"/>
</dbReference>
<dbReference type="PANTHER" id="PTHR33515">
    <property type="entry name" value="RIBOSOME-BINDING FACTOR A, CHLOROPLASTIC-RELATED"/>
    <property type="match status" value="1"/>
</dbReference>
<dbReference type="PANTHER" id="PTHR33515:SF1">
    <property type="entry name" value="RIBOSOME-BINDING FACTOR A, CHLOROPLASTIC-RELATED"/>
    <property type="match status" value="1"/>
</dbReference>
<dbReference type="Pfam" id="PF02033">
    <property type="entry name" value="RBFA"/>
    <property type="match status" value="1"/>
</dbReference>
<dbReference type="SUPFAM" id="SSF89919">
    <property type="entry name" value="Ribosome-binding factor A, RbfA"/>
    <property type="match status" value="1"/>
</dbReference>
<dbReference type="PROSITE" id="PS01319">
    <property type="entry name" value="RBFA"/>
    <property type="match status" value="1"/>
</dbReference>
<keyword id="KW-0963">Cytoplasm</keyword>
<keyword id="KW-0690">Ribosome biogenesis</keyword>